<feature type="chain" id="PRO_0000445231" description="ATPase family protein 2 homolog">
    <location>
        <begin position="1"/>
        <end position="724"/>
    </location>
</feature>
<feature type="binding site" evidence="1">
    <location>
        <begin position="281"/>
        <end position="287"/>
    </location>
    <ligand>
        <name>ATP</name>
        <dbReference type="ChEBI" id="CHEBI:30616"/>
        <label>1</label>
    </ligand>
</feature>
<feature type="binding site" evidence="1">
    <location>
        <begin position="503"/>
        <end position="508"/>
    </location>
    <ligand>
        <name>ATP</name>
        <dbReference type="ChEBI" id="CHEBI:30616"/>
        <label>2</label>
    </ligand>
</feature>
<feature type="mutagenesis site" description="Severe loss of catalytic activity. Prevents inhibition of air-2 kinase activity without affecting the interaction with air-2." evidence="3">
    <original>K</original>
    <variation>T</variation>
    <location>
        <position position="285"/>
    </location>
</feature>
<feature type="mutagenesis site" description="Does not prevent inhibition of air-2 kinase activity or interaction with air-2." evidence="3">
    <original>R</original>
    <variation>A</variation>
    <location>
        <position position="365"/>
    </location>
</feature>
<feature type="mutagenesis site" description="No effect on catalytic activity. Prevents inhibition of air-2 kinase activity or interaction with air-2." evidence="3">
    <original>R</original>
    <variation>A</variation>
    <location>
        <position position="367"/>
    </location>
</feature>
<accession>Q21222</accession>
<sequence>MSSAKKKPSLVTCPQCNAVVLTKDSLRHQDFCGKPVVESEIACAQNGTLRGFNVAVDKAEGFLPPDAVGWEKEHSILINQQTMESLGLLARQPVRIIHSSDSFIGIVWPCKEVALLKVSIISSRIARERMITLESCGRVEKLKSLSVTVKTSLTLNPALSGFLEAYLSHSYLQYNSSVDLKYLGQNVTVTPEEPIESKMSAMGIDDDKKRNSKVVSTAVGYKIQILNASAEGSTSDVLQTLPTDLSNIGGCFTAKQVLEDYVISPVRQKESPCSVLIWGLPGSGKTLLLKEVALVLSGSTTYIGSCEELMELNGVTTGNIVIVDVNELEKENTKANRALSFLLGDEKKCVILCVRSSETLDIGFRVRFPIEAEITVPTQDERLDILSKIGNIYNFPLELHLDVARHTHGFTGGDLCSLLKAAKFARGRTHLERVNDARKRIRPTGIRQFILEVPNVSWNDIGGNEELKLEIQQAVIWPQKHPEAFERFGIDPPAGILLYGPPGCSKTLIARALASEAKMNFLAVKGPELFSKWVGDSEKAIRDLFSRARQVAPTIVFFDEIDAVGSSRGSEKSSGVSDRVLAQLLTELDGLEKSSRVILLAATNRPDQLDSALLRPGRLDRAIYVGLPCEVTRRAILEMRTKKMKFDDTVRTIDKLVEKTSGYSGAELVAVCRTAAMFAMRESIDATIVQWTHFEQALAAVVSRTEAYLLEIYDDFKAGRASNA</sequence>
<dbReference type="EC" id="3.6.4.10" evidence="3"/>
<dbReference type="EMBL" id="BX284601">
    <property type="protein sequence ID" value="CAB00040.1"/>
    <property type="molecule type" value="Genomic_DNA"/>
</dbReference>
<dbReference type="PIR" id="T23322">
    <property type="entry name" value="T23322"/>
</dbReference>
<dbReference type="RefSeq" id="NP_492211.1">
    <property type="nucleotide sequence ID" value="NM_059810.8"/>
</dbReference>
<dbReference type="SMR" id="Q21222"/>
<dbReference type="FunCoup" id="Q21222">
    <property type="interactions" value="125"/>
</dbReference>
<dbReference type="STRING" id="6239.K04G2.3.1"/>
<dbReference type="PaxDb" id="6239-K04G2.3"/>
<dbReference type="PeptideAtlas" id="Q21222"/>
<dbReference type="EnsemblMetazoa" id="K04G2.3.1">
    <property type="protein sequence ID" value="K04G2.3.1"/>
    <property type="gene ID" value="WBGene00010562"/>
</dbReference>
<dbReference type="GeneID" id="172586"/>
<dbReference type="KEGG" id="cel:CELE_K04G2.3"/>
<dbReference type="UCSC" id="K04G2.3">
    <property type="organism name" value="c. elegans"/>
</dbReference>
<dbReference type="AGR" id="WB:WBGene00010562"/>
<dbReference type="CTD" id="172586"/>
<dbReference type="WormBase" id="K04G2.3">
    <property type="protein sequence ID" value="CE06097"/>
    <property type="gene ID" value="WBGene00010562"/>
    <property type="gene designation" value="cdc-48.3"/>
</dbReference>
<dbReference type="eggNOG" id="KOG0730">
    <property type="taxonomic scope" value="Eukaryota"/>
</dbReference>
<dbReference type="GeneTree" id="ENSGT00940000157323"/>
<dbReference type="HOGENOM" id="CLU_000688_18_0_1"/>
<dbReference type="InParanoid" id="Q21222"/>
<dbReference type="OMA" id="RGRFPCE"/>
<dbReference type="OrthoDB" id="27435at2759"/>
<dbReference type="PhylomeDB" id="Q21222"/>
<dbReference type="PRO" id="PR:Q21222"/>
<dbReference type="Proteomes" id="UP000001940">
    <property type="component" value="Chromosome I"/>
</dbReference>
<dbReference type="Bgee" id="WBGene00010562">
    <property type="expression patterns" value="Expressed in germ line (C elegans) and 4 other cell types or tissues"/>
</dbReference>
<dbReference type="GO" id="GO:0005737">
    <property type="term" value="C:cytoplasm"/>
    <property type="evidence" value="ECO:0000314"/>
    <property type="project" value="WormBase"/>
</dbReference>
<dbReference type="GO" id="GO:0005524">
    <property type="term" value="F:ATP binding"/>
    <property type="evidence" value="ECO:0007669"/>
    <property type="project" value="UniProtKB-KW"/>
</dbReference>
<dbReference type="GO" id="GO:0016887">
    <property type="term" value="F:ATP hydrolysis activity"/>
    <property type="evidence" value="ECO:0000314"/>
    <property type="project" value="WormBase"/>
</dbReference>
<dbReference type="GO" id="GO:0019901">
    <property type="term" value="F:protein kinase binding"/>
    <property type="evidence" value="ECO:0000353"/>
    <property type="project" value="WormBase"/>
</dbReference>
<dbReference type="GO" id="GO:0004860">
    <property type="term" value="F:protein kinase inhibitor activity"/>
    <property type="evidence" value="ECO:0000314"/>
    <property type="project" value="WormBase"/>
</dbReference>
<dbReference type="GO" id="GO:0051301">
    <property type="term" value="P:cell division"/>
    <property type="evidence" value="ECO:0007669"/>
    <property type="project" value="UniProtKB-KW"/>
</dbReference>
<dbReference type="GO" id="GO:0042273">
    <property type="term" value="P:ribosomal large subunit biogenesis"/>
    <property type="evidence" value="ECO:0000318"/>
    <property type="project" value="GO_Central"/>
</dbReference>
<dbReference type="CDD" id="cd19511">
    <property type="entry name" value="RecA-like_CDC48_r2-like"/>
    <property type="match status" value="1"/>
</dbReference>
<dbReference type="FunFam" id="3.40.50.300:FF:000567">
    <property type="entry name" value="ATPase, AAA family protein"/>
    <property type="match status" value="1"/>
</dbReference>
<dbReference type="FunFam" id="1.10.8.60:FF:000178">
    <property type="entry name" value="CDC48/VCP homolog, AAA superfamily"/>
    <property type="match status" value="1"/>
</dbReference>
<dbReference type="Gene3D" id="1.10.8.60">
    <property type="match status" value="2"/>
</dbReference>
<dbReference type="Gene3D" id="3.40.50.300">
    <property type="entry name" value="P-loop containing nucleotide triphosphate hydrolases"/>
    <property type="match status" value="2"/>
</dbReference>
<dbReference type="InterPro" id="IPR003593">
    <property type="entry name" value="AAA+_ATPase"/>
</dbReference>
<dbReference type="InterPro" id="IPR050168">
    <property type="entry name" value="AAA_ATPase_domain"/>
</dbReference>
<dbReference type="InterPro" id="IPR041569">
    <property type="entry name" value="AAA_lid_3"/>
</dbReference>
<dbReference type="InterPro" id="IPR003959">
    <property type="entry name" value="ATPase_AAA_core"/>
</dbReference>
<dbReference type="InterPro" id="IPR003960">
    <property type="entry name" value="ATPase_AAA_CS"/>
</dbReference>
<dbReference type="InterPro" id="IPR027417">
    <property type="entry name" value="P-loop_NTPase"/>
</dbReference>
<dbReference type="PANTHER" id="PTHR23077">
    <property type="entry name" value="AAA-FAMILY ATPASE"/>
    <property type="match status" value="1"/>
</dbReference>
<dbReference type="PANTHER" id="PTHR23077:SF27">
    <property type="entry name" value="ATPASE FAMILY GENE 2 PROTEIN HOMOLOG A"/>
    <property type="match status" value="1"/>
</dbReference>
<dbReference type="Pfam" id="PF00004">
    <property type="entry name" value="AAA"/>
    <property type="match status" value="1"/>
</dbReference>
<dbReference type="Pfam" id="PF17862">
    <property type="entry name" value="AAA_lid_3"/>
    <property type="match status" value="1"/>
</dbReference>
<dbReference type="SMART" id="SM00382">
    <property type="entry name" value="AAA"/>
    <property type="match status" value="2"/>
</dbReference>
<dbReference type="SUPFAM" id="SSF52540">
    <property type="entry name" value="P-loop containing nucleoside triphosphate hydrolases"/>
    <property type="match status" value="2"/>
</dbReference>
<dbReference type="PROSITE" id="PS00674">
    <property type="entry name" value="AAA"/>
    <property type="match status" value="1"/>
</dbReference>
<comment type="function">
    <text evidence="1 2 3">ATP-dependent chaperone which uses the energy provided by ATP hydrolysis to generate mechanical force to disassemble protein complexes (By similarity). Required for various steps of embryonic mitosis including centrosome duplication, spindle assembly, ER dynamics and cell cycle progression (PubMed:15716356, PubMed:18854144). Regulates the stability and activity of kinase air-2, a component of the chromosomal passenger complex (CPC) (PubMed:18854144). Inhibits air-2 kinase activity from metaphase to late telophase and negatively regulates air-2 stability during mitotic exit (PubMed:18854144). Controls ER transition into sheet-like structures at the onset of mitosis, possibly by regulating homotypic membrane fusion (PubMed:15716356).</text>
</comment>
<comment type="catalytic activity">
    <reaction evidence="3">
        <text>ATP + H2O = ADP + phosphate + H(+)</text>
        <dbReference type="Rhea" id="RHEA:13065"/>
        <dbReference type="ChEBI" id="CHEBI:15377"/>
        <dbReference type="ChEBI" id="CHEBI:15378"/>
        <dbReference type="ChEBI" id="CHEBI:30616"/>
        <dbReference type="ChEBI" id="CHEBI:43474"/>
        <dbReference type="ChEBI" id="CHEBI:456216"/>
        <dbReference type="EC" id="3.6.4.10"/>
    </reaction>
</comment>
<comment type="subunit">
    <text evidence="1 3">Homohexamer; ATP binding induces oligomerization (By similarity). Forms a ring-shaped particle of about 12 nm diameter, that displays 6-fold radial symmetry (By similarity). Interacts (via N-terminus) with kinase air-2; the interaction is direct and inhibits air-2 kinase activity in an ATPase-dependent manner.</text>
</comment>
<comment type="subcellular location">
    <subcellularLocation>
        <location evidence="3">Cytoplasm</location>
    </subcellularLocation>
</comment>
<comment type="domain">
    <text evidence="1">The first ATP-binding region binds ATP with low affinity whereas the second ATP-binding region binds ATP with high affinity.</text>
</comment>
<comment type="disruption phenotype">
    <text evidence="2 3">RNAi-mediated knockdown causes embryonic lethality (PubMed:15716356, PubMed:18854144). The first embryonic cell divisions have mitotic spindle and chromosome segregation defects, and mitotic progression is significantly delayed (PubMed:18854144). At late telophase/G1, air-2 accumulates at the spindle midbody abnormally persisting following cleavage furrow ingression and into the next mitotic cycle (PubMed:18854144). Loss of inhibition of air-2 kinase activity (PubMed:18854144). Also, causes defects in ER dynamics characterized by a failure of the ER to form a sheet structure at the onset of mitosis and remains in large aggregates throughout mitosis (PubMed:15716356). In an air-2 (os207) mutant background, which lacks air-2 catalytic activity, restores normal mitosis and thus embryonic viability (PubMed:18854144).</text>
</comment>
<comment type="similarity">
    <text evidence="4">Belongs to the AAA ATPase family. AFG2 subfamily.</text>
</comment>
<evidence type="ECO:0000250" key="1">
    <source>
        <dbReference type="UniProtKB" id="P32794"/>
    </source>
</evidence>
<evidence type="ECO:0000269" key="2">
    <source>
    </source>
</evidence>
<evidence type="ECO:0000269" key="3">
    <source>
    </source>
</evidence>
<evidence type="ECO:0000305" key="4"/>
<evidence type="ECO:0000312" key="5">
    <source>
        <dbReference type="Proteomes" id="UP000001940"/>
    </source>
</evidence>
<evidence type="ECO:0000312" key="6">
    <source>
        <dbReference type="WormBase" id="K04G2.3"/>
    </source>
</evidence>
<name>AFG2H_CAEEL</name>
<keyword id="KW-0067">ATP-binding</keyword>
<keyword id="KW-0131">Cell cycle</keyword>
<keyword id="KW-0132">Cell division</keyword>
<keyword id="KW-0143">Chaperone</keyword>
<keyword id="KW-0963">Cytoplasm</keyword>
<keyword id="KW-0378">Hydrolase</keyword>
<keyword id="KW-0498">Mitosis</keyword>
<keyword id="KW-0547">Nucleotide-binding</keyword>
<keyword id="KW-1185">Reference proteome</keyword>
<reference evidence="5" key="1">
    <citation type="journal article" date="1998" name="Science">
        <title>Genome sequence of the nematode C. elegans: a platform for investigating biology.</title>
        <authorList>
            <consortium name="The C. elegans sequencing consortium"/>
        </authorList>
    </citation>
    <scope>NUCLEOTIDE SEQUENCE [LARGE SCALE GENOMIC DNA]</scope>
    <source>
        <strain evidence="5">Bristol N2</strain>
    </source>
</reference>
<reference evidence="4" key="2">
    <citation type="journal article" date="2005" name="Mol. Biol. Cell">
        <title>Involvement of the actin cytoskeleton and homotypic membrane fusion in ER dynamics in Caenorhabditis elegans.</title>
        <authorList>
            <person name="Poteryaev D."/>
            <person name="Squirrell J.M."/>
            <person name="Campbell J.M."/>
            <person name="White J.G."/>
            <person name="Spang A."/>
        </authorList>
    </citation>
    <scope>FUNCTION</scope>
    <scope>DISRUPTION PHENOTYPE</scope>
</reference>
<reference evidence="4" key="3">
    <citation type="journal article" date="2008" name="Dev. Cell">
        <title>An Afg2/Spaf-related Cdc48-like AAA ATPase regulates the stability and activity of the C. elegans Aurora B kinase AIR-2.</title>
        <authorList>
            <person name="Heallen T.R."/>
            <person name="Adams H.P."/>
            <person name="Furuta T."/>
            <person name="Verbrugghe K.J."/>
            <person name="Schumacher J.M."/>
        </authorList>
    </citation>
    <scope>FUNCTION</scope>
    <scope>CATALYTIC ACTIVITY</scope>
    <scope>INTERACTION WITH AIR-2</scope>
    <scope>SUBCELLULAR LOCATION</scope>
    <scope>DISRUPTION PHENOTYPE</scope>
    <scope>MUTAGENESIS OF LYS-285; ARG-365 AND ARG-367</scope>
</reference>
<proteinExistence type="evidence at protein level"/>
<protein>
    <recommendedName>
        <fullName evidence="4">ATPase family protein 2 homolog</fullName>
        <ecNumber evidence="3">3.6.4.10</ecNumber>
    </recommendedName>
    <alternativeName>
        <fullName evidence="6">Cell division cycle-related protein 48.3</fullName>
    </alternativeName>
</protein>
<organism evidence="5">
    <name type="scientific">Caenorhabditis elegans</name>
    <dbReference type="NCBI Taxonomy" id="6239"/>
    <lineage>
        <taxon>Eukaryota</taxon>
        <taxon>Metazoa</taxon>
        <taxon>Ecdysozoa</taxon>
        <taxon>Nematoda</taxon>
        <taxon>Chromadorea</taxon>
        <taxon>Rhabditida</taxon>
        <taxon>Rhabditina</taxon>
        <taxon>Rhabditomorpha</taxon>
        <taxon>Rhabditoidea</taxon>
        <taxon>Rhabditidae</taxon>
        <taxon>Peloderinae</taxon>
        <taxon>Caenorhabditis</taxon>
    </lineage>
</organism>
<gene>
    <name evidence="6" type="primary">cdc-48.3</name>
    <name evidence="6" type="ORF">K04G2.3</name>
</gene>